<feature type="chain" id="PRO_0000231712" description="Imidazole glycerol phosphate synthase subunit HisH">
    <location>
        <begin position="1"/>
        <end position="213"/>
    </location>
</feature>
<feature type="domain" description="Glutamine amidotransferase type-1" evidence="1">
    <location>
        <begin position="4"/>
        <end position="213"/>
    </location>
</feature>
<feature type="active site" description="Nucleophile" evidence="1">
    <location>
        <position position="83"/>
    </location>
</feature>
<feature type="active site" evidence="1">
    <location>
        <position position="193"/>
    </location>
</feature>
<feature type="active site" evidence="1">
    <location>
        <position position="195"/>
    </location>
</feature>
<comment type="function">
    <text evidence="1">IGPS catalyzes the conversion of PRFAR and glutamine to IGP, AICAR and glutamate. The HisH subunit catalyzes the hydrolysis of glutamine to glutamate and ammonia as part of the synthesis of IGP and AICAR. The resulting ammonia molecule is channeled to the active site of HisF.</text>
</comment>
<comment type="catalytic activity">
    <reaction evidence="1">
        <text>5-[(5-phospho-1-deoxy-D-ribulos-1-ylimino)methylamino]-1-(5-phospho-beta-D-ribosyl)imidazole-4-carboxamide + L-glutamine = D-erythro-1-(imidazol-4-yl)glycerol 3-phosphate + 5-amino-1-(5-phospho-beta-D-ribosyl)imidazole-4-carboxamide + L-glutamate + H(+)</text>
        <dbReference type="Rhea" id="RHEA:24793"/>
        <dbReference type="ChEBI" id="CHEBI:15378"/>
        <dbReference type="ChEBI" id="CHEBI:29985"/>
        <dbReference type="ChEBI" id="CHEBI:58278"/>
        <dbReference type="ChEBI" id="CHEBI:58359"/>
        <dbReference type="ChEBI" id="CHEBI:58475"/>
        <dbReference type="ChEBI" id="CHEBI:58525"/>
        <dbReference type="EC" id="4.3.2.10"/>
    </reaction>
</comment>
<comment type="catalytic activity">
    <reaction evidence="1">
        <text>L-glutamine + H2O = L-glutamate + NH4(+)</text>
        <dbReference type="Rhea" id="RHEA:15889"/>
        <dbReference type="ChEBI" id="CHEBI:15377"/>
        <dbReference type="ChEBI" id="CHEBI:28938"/>
        <dbReference type="ChEBI" id="CHEBI:29985"/>
        <dbReference type="ChEBI" id="CHEBI:58359"/>
        <dbReference type="EC" id="3.5.1.2"/>
    </reaction>
</comment>
<comment type="pathway">
    <text evidence="1">Amino-acid biosynthesis; L-histidine biosynthesis; L-histidine from 5-phospho-alpha-D-ribose 1-diphosphate: step 5/9.</text>
</comment>
<comment type="subunit">
    <text evidence="1">Heterodimer of HisH and HisF.</text>
</comment>
<comment type="subcellular location">
    <subcellularLocation>
        <location evidence="1">Cytoplasm</location>
    </subcellularLocation>
</comment>
<keyword id="KW-0028">Amino-acid biosynthesis</keyword>
<keyword id="KW-0963">Cytoplasm</keyword>
<keyword id="KW-0315">Glutamine amidotransferase</keyword>
<keyword id="KW-0368">Histidine biosynthesis</keyword>
<keyword id="KW-0378">Hydrolase</keyword>
<keyword id="KW-0456">Lyase</keyword>
<proteinExistence type="inferred from homology"/>
<dbReference type="EC" id="4.3.2.10" evidence="1"/>
<dbReference type="EC" id="3.5.1.2" evidence="1"/>
<dbReference type="EMBL" id="CP000151">
    <property type="protein sequence ID" value="ABB07129.1"/>
    <property type="molecule type" value="Genomic_DNA"/>
</dbReference>
<dbReference type="RefSeq" id="WP_011350730.1">
    <property type="nucleotide sequence ID" value="NZ_CABVQN010000030.1"/>
</dbReference>
<dbReference type="SMR" id="Q39K87"/>
<dbReference type="GeneID" id="93193368"/>
<dbReference type="KEGG" id="bur:Bcep18194_A3527"/>
<dbReference type="PATRIC" id="fig|482957.22.peg.372"/>
<dbReference type="HOGENOM" id="CLU_071837_2_0_4"/>
<dbReference type="UniPathway" id="UPA00031">
    <property type="reaction ID" value="UER00010"/>
</dbReference>
<dbReference type="Proteomes" id="UP000002705">
    <property type="component" value="Chromosome 1"/>
</dbReference>
<dbReference type="GO" id="GO:0005737">
    <property type="term" value="C:cytoplasm"/>
    <property type="evidence" value="ECO:0007669"/>
    <property type="project" value="UniProtKB-SubCell"/>
</dbReference>
<dbReference type="GO" id="GO:0004359">
    <property type="term" value="F:glutaminase activity"/>
    <property type="evidence" value="ECO:0007669"/>
    <property type="project" value="UniProtKB-EC"/>
</dbReference>
<dbReference type="GO" id="GO:0000107">
    <property type="term" value="F:imidazoleglycerol-phosphate synthase activity"/>
    <property type="evidence" value="ECO:0007669"/>
    <property type="project" value="UniProtKB-UniRule"/>
</dbReference>
<dbReference type="GO" id="GO:0016829">
    <property type="term" value="F:lyase activity"/>
    <property type="evidence" value="ECO:0007669"/>
    <property type="project" value="UniProtKB-KW"/>
</dbReference>
<dbReference type="GO" id="GO:0000105">
    <property type="term" value="P:L-histidine biosynthetic process"/>
    <property type="evidence" value="ECO:0007669"/>
    <property type="project" value="UniProtKB-UniRule"/>
</dbReference>
<dbReference type="CDD" id="cd01748">
    <property type="entry name" value="GATase1_IGP_Synthase"/>
    <property type="match status" value="1"/>
</dbReference>
<dbReference type="Gene3D" id="3.40.50.880">
    <property type="match status" value="1"/>
</dbReference>
<dbReference type="HAMAP" id="MF_00278">
    <property type="entry name" value="HisH"/>
    <property type="match status" value="1"/>
</dbReference>
<dbReference type="InterPro" id="IPR029062">
    <property type="entry name" value="Class_I_gatase-like"/>
</dbReference>
<dbReference type="InterPro" id="IPR017926">
    <property type="entry name" value="GATASE"/>
</dbReference>
<dbReference type="InterPro" id="IPR010139">
    <property type="entry name" value="Imidazole-glycPsynth_HisH"/>
</dbReference>
<dbReference type="NCBIfam" id="TIGR01855">
    <property type="entry name" value="IMP_synth_hisH"/>
    <property type="match status" value="1"/>
</dbReference>
<dbReference type="PANTHER" id="PTHR42701">
    <property type="entry name" value="IMIDAZOLE GLYCEROL PHOSPHATE SYNTHASE SUBUNIT HISH"/>
    <property type="match status" value="1"/>
</dbReference>
<dbReference type="PANTHER" id="PTHR42701:SF2">
    <property type="entry name" value="IMIDAZOLE GLYCEROL PHOSPHATE SYNTHASE SUBUNIT HISH 1"/>
    <property type="match status" value="1"/>
</dbReference>
<dbReference type="Pfam" id="PF00117">
    <property type="entry name" value="GATase"/>
    <property type="match status" value="1"/>
</dbReference>
<dbReference type="PIRSF" id="PIRSF000495">
    <property type="entry name" value="Amidotransf_hisH"/>
    <property type="match status" value="1"/>
</dbReference>
<dbReference type="SUPFAM" id="SSF52317">
    <property type="entry name" value="Class I glutamine amidotransferase-like"/>
    <property type="match status" value="1"/>
</dbReference>
<dbReference type="PROSITE" id="PS51273">
    <property type="entry name" value="GATASE_TYPE_1"/>
    <property type="match status" value="1"/>
</dbReference>
<sequence length="213" mass="23350">MKTSIAIVDYGMGNLRSVAQALKKAEPAADVAIVDTPAAIRAADRVVLPGQGAMPDCMRSLGESGLQEAVIEASRTKPLLGVCVGEQMLFDWSAEGDTKGLGLLPGKVVRFELDGRLQDDGSRFKVPQMGWNRVRQSQPHPLWDGVPDDAYFYFVHSYYVTPDNPAHTVGETAYGAPFTSAVARDNLFATQFHPEKSAEVGLRLYRNFVHWKP</sequence>
<accession>Q39K87</accession>
<gene>
    <name evidence="1" type="primary">hisH</name>
    <name type="ordered locus">Bcep18194_A3527</name>
</gene>
<protein>
    <recommendedName>
        <fullName evidence="1">Imidazole glycerol phosphate synthase subunit HisH</fullName>
        <ecNumber evidence="1">4.3.2.10</ecNumber>
    </recommendedName>
    <alternativeName>
        <fullName evidence="1">IGP synthase glutaminase subunit</fullName>
        <ecNumber evidence="1">3.5.1.2</ecNumber>
    </alternativeName>
    <alternativeName>
        <fullName evidence="1">IGP synthase subunit HisH</fullName>
    </alternativeName>
    <alternativeName>
        <fullName evidence="1">ImGP synthase subunit HisH</fullName>
        <shortName evidence="1">IGPS subunit HisH</shortName>
    </alternativeName>
</protein>
<evidence type="ECO:0000255" key="1">
    <source>
        <dbReference type="HAMAP-Rule" id="MF_00278"/>
    </source>
</evidence>
<name>HIS5_BURL3</name>
<organism>
    <name type="scientific">Burkholderia lata (strain ATCC 17760 / DSM 23089 / LMG 22485 / NCIMB 9086 / R18194 / 383)</name>
    <dbReference type="NCBI Taxonomy" id="482957"/>
    <lineage>
        <taxon>Bacteria</taxon>
        <taxon>Pseudomonadati</taxon>
        <taxon>Pseudomonadota</taxon>
        <taxon>Betaproteobacteria</taxon>
        <taxon>Burkholderiales</taxon>
        <taxon>Burkholderiaceae</taxon>
        <taxon>Burkholderia</taxon>
        <taxon>Burkholderia cepacia complex</taxon>
    </lineage>
</organism>
<reference key="1">
    <citation type="submission" date="2005-10" db="EMBL/GenBank/DDBJ databases">
        <title>Complete sequence of chromosome 1 of Burkholderia sp. 383.</title>
        <authorList>
            <consortium name="US DOE Joint Genome Institute"/>
            <person name="Copeland A."/>
            <person name="Lucas S."/>
            <person name="Lapidus A."/>
            <person name="Barry K."/>
            <person name="Detter J.C."/>
            <person name="Glavina T."/>
            <person name="Hammon N."/>
            <person name="Israni S."/>
            <person name="Pitluck S."/>
            <person name="Chain P."/>
            <person name="Malfatti S."/>
            <person name="Shin M."/>
            <person name="Vergez L."/>
            <person name="Schmutz J."/>
            <person name="Larimer F."/>
            <person name="Land M."/>
            <person name="Kyrpides N."/>
            <person name="Lykidis A."/>
            <person name="Richardson P."/>
        </authorList>
    </citation>
    <scope>NUCLEOTIDE SEQUENCE [LARGE SCALE GENOMIC DNA]</scope>
    <source>
        <strain>ATCC 17760 / DSM 23089 / LMG 22485 / NCIMB 9086 / R18194 / 383</strain>
    </source>
</reference>